<organism>
    <name type="scientific">Escherichia coli O127:H6 (strain E2348/69 / EPEC)</name>
    <dbReference type="NCBI Taxonomy" id="574521"/>
    <lineage>
        <taxon>Bacteria</taxon>
        <taxon>Pseudomonadati</taxon>
        <taxon>Pseudomonadota</taxon>
        <taxon>Gammaproteobacteria</taxon>
        <taxon>Enterobacterales</taxon>
        <taxon>Enterobacteriaceae</taxon>
        <taxon>Escherichia</taxon>
    </lineage>
</organism>
<protein>
    <recommendedName>
        <fullName evidence="1">Probable Fe(2+)-trafficking protein</fullName>
    </recommendedName>
</protein>
<sequence length="91" mass="10953">MSRTIFCTFLQREAEGQDFQLYPGELGKRIYNEISKEAWAQWQHKQTMLINEKKLNMMNAEHRKLLEQEMVNFLFEGKEVHIEGYTPEDKK</sequence>
<gene>
    <name evidence="1" type="primary">yggX</name>
    <name type="ordered locus">E2348C_3215</name>
</gene>
<accession>B7UI09</accession>
<proteinExistence type="inferred from homology"/>
<dbReference type="EMBL" id="FM180568">
    <property type="protein sequence ID" value="CAS10763.1"/>
    <property type="molecule type" value="Genomic_DNA"/>
</dbReference>
<dbReference type="RefSeq" id="WP_000091700.1">
    <property type="nucleotide sequence ID" value="NC_011601.1"/>
</dbReference>
<dbReference type="SMR" id="B7UI09"/>
<dbReference type="KEGG" id="ecg:E2348C_3215"/>
<dbReference type="HOGENOM" id="CLU_170994_0_0_6"/>
<dbReference type="Proteomes" id="UP000008205">
    <property type="component" value="Chromosome"/>
</dbReference>
<dbReference type="GO" id="GO:0005829">
    <property type="term" value="C:cytosol"/>
    <property type="evidence" value="ECO:0007669"/>
    <property type="project" value="TreeGrafter"/>
</dbReference>
<dbReference type="GO" id="GO:0005506">
    <property type="term" value="F:iron ion binding"/>
    <property type="evidence" value="ECO:0007669"/>
    <property type="project" value="UniProtKB-UniRule"/>
</dbReference>
<dbReference type="GO" id="GO:0034599">
    <property type="term" value="P:cellular response to oxidative stress"/>
    <property type="evidence" value="ECO:0007669"/>
    <property type="project" value="TreeGrafter"/>
</dbReference>
<dbReference type="FunFam" id="1.10.3880.10:FF:000001">
    <property type="entry name" value="Probable Fe(2+)-trafficking protein"/>
    <property type="match status" value="1"/>
</dbReference>
<dbReference type="Gene3D" id="1.10.3880.10">
    <property type="entry name" value="Fe(II) trafficking protein YggX"/>
    <property type="match status" value="1"/>
</dbReference>
<dbReference type="HAMAP" id="MF_00686">
    <property type="entry name" value="Fe_traffic_YggX"/>
    <property type="match status" value="1"/>
</dbReference>
<dbReference type="InterPro" id="IPR007457">
    <property type="entry name" value="Fe_traffick_prot_YggX"/>
</dbReference>
<dbReference type="InterPro" id="IPR036766">
    <property type="entry name" value="Fe_traffick_prot_YggX_sf"/>
</dbReference>
<dbReference type="NCBIfam" id="NF003817">
    <property type="entry name" value="PRK05408.1"/>
    <property type="match status" value="1"/>
</dbReference>
<dbReference type="PANTHER" id="PTHR36965">
    <property type="entry name" value="FE(2+)-TRAFFICKING PROTEIN-RELATED"/>
    <property type="match status" value="1"/>
</dbReference>
<dbReference type="PANTHER" id="PTHR36965:SF1">
    <property type="entry name" value="FE(2+)-TRAFFICKING PROTEIN-RELATED"/>
    <property type="match status" value="1"/>
</dbReference>
<dbReference type="Pfam" id="PF04362">
    <property type="entry name" value="Iron_traffic"/>
    <property type="match status" value="1"/>
</dbReference>
<dbReference type="PIRSF" id="PIRSF029827">
    <property type="entry name" value="Fe_traffic_YggX"/>
    <property type="match status" value="1"/>
</dbReference>
<dbReference type="SUPFAM" id="SSF111148">
    <property type="entry name" value="YggX-like"/>
    <property type="match status" value="1"/>
</dbReference>
<keyword id="KW-0408">Iron</keyword>
<keyword id="KW-1185">Reference proteome</keyword>
<feature type="chain" id="PRO_1000147764" description="Probable Fe(2+)-trafficking protein">
    <location>
        <begin position="1"/>
        <end position="91"/>
    </location>
</feature>
<reference key="1">
    <citation type="journal article" date="2009" name="J. Bacteriol.">
        <title>Complete genome sequence and comparative genome analysis of enteropathogenic Escherichia coli O127:H6 strain E2348/69.</title>
        <authorList>
            <person name="Iguchi A."/>
            <person name="Thomson N.R."/>
            <person name="Ogura Y."/>
            <person name="Saunders D."/>
            <person name="Ooka T."/>
            <person name="Henderson I.R."/>
            <person name="Harris D."/>
            <person name="Asadulghani M."/>
            <person name="Kurokawa K."/>
            <person name="Dean P."/>
            <person name="Kenny B."/>
            <person name="Quail M.A."/>
            <person name="Thurston S."/>
            <person name="Dougan G."/>
            <person name="Hayashi T."/>
            <person name="Parkhill J."/>
            <person name="Frankel G."/>
        </authorList>
    </citation>
    <scope>NUCLEOTIDE SEQUENCE [LARGE SCALE GENOMIC DNA]</scope>
    <source>
        <strain>E2348/69 / EPEC</strain>
    </source>
</reference>
<name>FETP_ECO27</name>
<evidence type="ECO:0000255" key="1">
    <source>
        <dbReference type="HAMAP-Rule" id="MF_00686"/>
    </source>
</evidence>
<comment type="function">
    <text evidence="1">Could be a mediator in iron transactions between iron acquisition and iron-requiring processes, such as synthesis and/or repair of Fe-S clusters in biosynthetic enzymes.</text>
</comment>
<comment type="subunit">
    <text evidence="1">Monomer.</text>
</comment>
<comment type="similarity">
    <text evidence="1">Belongs to the Fe(2+)-trafficking protein family.</text>
</comment>